<evidence type="ECO:0000250" key="1"/>
<evidence type="ECO:0000255" key="2">
    <source>
        <dbReference type="PROSITE-ProRule" id="PRU00681"/>
    </source>
</evidence>
<evidence type="ECO:0000305" key="3"/>
<dbReference type="EMBL" id="AF030824">
    <property type="protein sequence ID" value="AAC36127.1"/>
    <property type="molecule type" value="Genomic_DNA"/>
</dbReference>
<dbReference type="EMBL" id="AL591977">
    <property type="protein sequence ID" value="CAC99080.1"/>
    <property type="molecule type" value="Genomic_DNA"/>
</dbReference>
<dbReference type="PIR" id="AB1200">
    <property type="entry name" value="AB1200"/>
</dbReference>
<dbReference type="RefSeq" id="NP_464527.1">
    <property type="nucleotide sequence ID" value="NC_003210.1"/>
</dbReference>
<dbReference type="RefSeq" id="WP_003719221.1">
    <property type="nucleotide sequence ID" value="NZ_CP149495.1"/>
</dbReference>
<dbReference type="SMR" id="P0A438"/>
<dbReference type="STRING" id="169963.gene:17593658"/>
<dbReference type="PaxDb" id="169963-lmo1002"/>
<dbReference type="EnsemblBacteria" id="CAC99080">
    <property type="protein sequence ID" value="CAC99080"/>
    <property type="gene ID" value="CAC99080"/>
</dbReference>
<dbReference type="GeneID" id="986517"/>
<dbReference type="KEGG" id="lmo:lmo1002"/>
<dbReference type="PATRIC" id="fig|169963.11.peg.1030"/>
<dbReference type="eggNOG" id="COG1925">
    <property type="taxonomic scope" value="Bacteria"/>
</dbReference>
<dbReference type="HOGENOM" id="CLU_136230_2_2_9"/>
<dbReference type="OrthoDB" id="9809047at2"/>
<dbReference type="PhylomeDB" id="P0A438"/>
<dbReference type="BioCyc" id="LMON169963:LMO1002-MONOMER"/>
<dbReference type="Proteomes" id="UP000000817">
    <property type="component" value="Chromosome"/>
</dbReference>
<dbReference type="GO" id="GO:0005737">
    <property type="term" value="C:cytoplasm"/>
    <property type="evidence" value="ECO:0007669"/>
    <property type="project" value="UniProtKB-SubCell"/>
</dbReference>
<dbReference type="GO" id="GO:0009401">
    <property type="term" value="P:phosphoenolpyruvate-dependent sugar phosphotransferase system"/>
    <property type="evidence" value="ECO:0000318"/>
    <property type="project" value="GO_Central"/>
</dbReference>
<dbReference type="CDD" id="cd00367">
    <property type="entry name" value="PTS-HPr_like"/>
    <property type="match status" value="1"/>
</dbReference>
<dbReference type="Gene3D" id="3.30.1340.10">
    <property type="entry name" value="HPr-like"/>
    <property type="match status" value="1"/>
</dbReference>
<dbReference type="InterPro" id="IPR050399">
    <property type="entry name" value="HPr"/>
</dbReference>
<dbReference type="InterPro" id="IPR000032">
    <property type="entry name" value="HPr-like"/>
</dbReference>
<dbReference type="InterPro" id="IPR035895">
    <property type="entry name" value="HPr-like_sf"/>
</dbReference>
<dbReference type="InterPro" id="IPR001020">
    <property type="entry name" value="PTS_HPr_His_P_site"/>
</dbReference>
<dbReference type="InterPro" id="IPR002114">
    <property type="entry name" value="PTS_HPr_Ser_P_site"/>
</dbReference>
<dbReference type="NCBIfam" id="NF010352">
    <property type="entry name" value="PRK13780.1"/>
    <property type="match status" value="1"/>
</dbReference>
<dbReference type="NCBIfam" id="TIGR01003">
    <property type="entry name" value="PTS_HPr_family"/>
    <property type="match status" value="1"/>
</dbReference>
<dbReference type="PANTHER" id="PTHR33705">
    <property type="entry name" value="PHOSPHOCARRIER PROTEIN HPR"/>
    <property type="match status" value="1"/>
</dbReference>
<dbReference type="PANTHER" id="PTHR33705:SF2">
    <property type="entry name" value="PHOSPHOCARRIER PROTEIN NPR"/>
    <property type="match status" value="1"/>
</dbReference>
<dbReference type="Pfam" id="PF00381">
    <property type="entry name" value="PTS-HPr"/>
    <property type="match status" value="1"/>
</dbReference>
<dbReference type="PRINTS" id="PR00107">
    <property type="entry name" value="PHOSPHOCPHPR"/>
</dbReference>
<dbReference type="SUPFAM" id="SSF55594">
    <property type="entry name" value="HPr-like"/>
    <property type="match status" value="1"/>
</dbReference>
<dbReference type="PROSITE" id="PS51350">
    <property type="entry name" value="PTS_HPR_DOM"/>
    <property type="match status" value="1"/>
</dbReference>
<dbReference type="PROSITE" id="PS00369">
    <property type="entry name" value="PTS_HPR_HIS"/>
    <property type="match status" value="1"/>
</dbReference>
<dbReference type="PROSITE" id="PS00589">
    <property type="entry name" value="PTS_HPR_SER"/>
    <property type="match status" value="1"/>
</dbReference>
<protein>
    <recommendedName>
        <fullName>Phosphocarrier protein HPr</fullName>
    </recommendedName>
    <alternativeName>
        <fullName>Histidine-containing protein</fullName>
    </alternativeName>
</protein>
<comment type="function">
    <text>General (non sugar-specific) component of the phosphoenolpyruvate-dependent sugar phosphotransferase system (sugar PTS). This major carbohydrate active-transport system catalyzes the phosphorylation of incoming sugar substrates concomitantly with their translocation across the cell membrane. The phosphoryl group from phosphoenolpyruvate (PEP) is transferred to the phosphoryl carrier protein HPr by enzyme I. Phospho-HPr then transfers it to the PTS EIIA domain.</text>
</comment>
<comment type="function">
    <text evidence="1">P-Ser-HPr interacts with the catabolite control protein A (CcpA), forming a complex that binds to DNA at the catabolite response elements cre, operator sites preceding a large number of catabolite-regulated genes. Thus, P-Ser-HPr is a corepressor in carbon catabolite repression (CCR), a mechanism that allows bacteria to coordinate and optimize the utilization of available carbon sources. P-Ser-HPr also plays a role in inducer exclusion, in which it probably interacts with several non-PTS permeases and inhibits their transport activity (By similarity).</text>
</comment>
<comment type="activity regulation">
    <text evidence="1">Phosphorylation on Ser-46 inhibits the phosphoryl transfer from enzyme I to HPr.</text>
</comment>
<comment type="subcellular location">
    <subcellularLocation>
        <location>Cytoplasm</location>
    </subcellularLocation>
</comment>
<comment type="similarity">
    <text evidence="3">Belongs to the HPr family.</text>
</comment>
<gene>
    <name type="primary">ptsH</name>
    <name type="ordered locus">lmo1002</name>
</gene>
<accession>P0A438</accession>
<accession>O31148</accession>
<keyword id="KW-0963">Cytoplasm</keyword>
<keyword id="KW-0597">Phosphoprotein</keyword>
<keyword id="KW-0598">Phosphotransferase system</keyword>
<keyword id="KW-1185">Reference proteome</keyword>
<keyword id="KW-0762">Sugar transport</keyword>
<keyword id="KW-0804">Transcription</keyword>
<keyword id="KW-0805">Transcription regulation</keyword>
<keyword id="KW-0813">Transport</keyword>
<sequence length="88" mass="9404">MEQASFVVIDETGIHARPATLLVQAASKYSSDVQIEYTGKKVNLKSIMGVMSLGIGKGADITIYTEGSDEKEAIEGLTEVLKKEGLAE</sequence>
<reference key="1">
    <citation type="journal article" date="1998" name="Appl. Environ. Microbiol.">
        <title>Cloning and expression of the Listeria monocytogenes Scott A ptsH and ptsI genes, coding for HPr and enzyme I, respectively, of the phosphotransferase system.</title>
        <authorList>
            <person name="Christensen D.P."/>
            <person name="Benson A.K."/>
            <person name="Hutkins R.W."/>
        </authorList>
    </citation>
    <scope>NUCLEOTIDE SEQUENCE [GENOMIC DNA]</scope>
    <source>
        <strain>Scott A</strain>
    </source>
</reference>
<reference key="2">
    <citation type="journal article" date="2001" name="Science">
        <title>Comparative genomics of Listeria species.</title>
        <authorList>
            <person name="Glaser P."/>
            <person name="Frangeul L."/>
            <person name="Buchrieser C."/>
            <person name="Rusniok C."/>
            <person name="Amend A."/>
            <person name="Baquero F."/>
            <person name="Berche P."/>
            <person name="Bloecker H."/>
            <person name="Brandt P."/>
            <person name="Chakraborty T."/>
            <person name="Charbit A."/>
            <person name="Chetouani F."/>
            <person name="Couve E."/>
            <person name="de Daruvar A."/>
            <person name="Dehoux P."/>
            <person name="Domann E."/>
            <person name="Dominguez-Bernal G."/>
            <person name="Duchaud E."/>
            <person name="Durant L."/>
            <person name="Dussurget O."/>
            <person name="Entian K.-D."/>
            <person name="Fsihi H."/>
            <person name="Garcia-del Portillo F."/>
            <person name="Garrido P."/>
            <person name="Gautier L."/>
            <person name="Goebel W."/>
            <person name="Gomez-Lopez N."/>
            <person name="Hain T."/>
            <person name="Hauf J."/>
            <person name="Jackson D."/>
            <person name="Jones L.-M."/>
            <person name="Kaerst U."/>
            <person name="Kreft J."/>
            <person name="Kuhn M."/>
            <person name="Kunst F."/>
            <person name="Kurapkat G."/>
            <person name="Madueno E."/>
            <person name="Maitournam A."/>
            <person name="Mata Vicente J."/>
            <person name="Ng E."/>
            <person name="Nedjari H."/>
            <person name="Nordsiek G."/>
            <person name="Novella S."/>
            <person name="de Pablos B."/>
            <person name="Perez-Diaz J.-C."/>
            <person name="Purcell R."/>
            <person name="Remmel B."/>
            <person name="Rose M."/>
            <person name="Schlueter T."/>
            <person name="Simoes N."/>
            <person name="Tierrez A."/>
            <person name="Vazquez-Boland J.-A."/>
            <person name="Voss H."/>
            <person name="Wehland J."/>
            <person name="Cossart P."/>
        </authorList>
    </citation>
    <scope>NUCLEOTIDE SEQUENCE [LARGE SCALE GENOMIC DNA]</scope>
    <source>
        <strain>ATCC BAA-679 / EGD-e</strain>
    </source>
</reference>
<organism>
    <name type="scientific">Listeria monocytogenes serovar 1/2a (strain ATCC BAA-679 / EGD-e)</name>
    <dbReference type="NCBI Taxonomy" id="169963"/>
    <lineage>
        <taxon>Bacteria</taxon>
        <taxon>Bacillati</taxon>
        <taxon>Bacillota</taxon>
        <taxon>Bacilli</taxon>
        <taxon>Bacillales</taxon>
        <taxon>Listeriaceae</taxon>
        <taxon>Listeria</taxon>
    </lineage>
</organism>
<feature type="chain" id="PRO_0000107861" description="Phosphocarrier protein HPr">
    <location>
        <begin position="1"/>
        <end position="88"/>
    </location>
</feature>
<feature type="domain" description="HPr" evidence="2">
    <location>
        <begin position="1"/>
        <end position="88"/>
    </location>
</feature>
<feature type="active site" description="Pros-phosphohistidine intermediate" evidence="2">
    <location>
        <position position="15"/>
    </location>
</feature>
<feature type="modified residue" description="Phosphoserine; by HPrK/P" evidence="2">
    <location>
        <position position="46"/>
    </location>
</feature>
<proteinExistence type="inferred from homology"/>
<name>PTHP_LISMO</name>